<keyword id="KW-1185">Reference proteome</keyword>
<keyword id="KW-0687">Ribonucleoprotein</keyword>
<keyword id="KW-0689">Ribosomal protein</keyword>
<accession>P66278</accession>
<accession>Q97R69</accession>
<organism>
    <name type="scientific">Streptococcus pneumoniae serotype 4 (strain ATCC BAA-334 / TIGR4)</name>
    <dbReference type="NCBI Taxonomy" id="170187"/>
    <lineage>
        <taxon>Bacteria</taxon>
        <taxon>Bacillati</taxon>
        <taxon>Bacillota</taxon>
        <taxon>Bacilli</taxon>
        <taxon>Lactobacillales</taxon>
        <taxon>Streptococcaceae</taxon>
        <taxon>Streptococcus</taxon>
    </lineage>
</organism>
<feature type="chain" id="PRO_0000177432" description="Large ribosomal subunit protein bL35">
    <location>
        <begin position="1"/>
        <end position="66"/>
    </location>
</feature>
<feature type="region of interest" description="Disordered" evidence="2">
    <location>
        <begin position="1"/>
        <end position="21"/>
    </location>
</feature>
<feature type="compositionally biased region" description="Basic residues" evidence="2">
    <location>
        <begin position="1"/>
        <end position="16"/>
    </location>
</feature>
<protein>
    <recommendedName>
        <fullName evidence="1">Large ribosomal subunit protein bL35</fullName>
    </recommendedName>
    <alternativeName>
        <fullName evidence="3">50S ribosomal protein L35</fullName>
    </alternativeName>
</protein>
<reference key="1">
    <citation type="journal article" date="2001" name="Science">
        <title>Complete genome sequence of a virulent isolate of Streptococcus pneumoniae.</title>
        <authorList>
            <person name="Tettelin H."/>
            <person name="Nelson K.E."/>
            <person name="Paulsen I.T."/>
            <person name="Eisen J.A."/>
            <person name="Read T.D."/>
            <person name="Peterson S.N."/>
            <person name="Heidelberg J.F."/>
            <person name="DeBoy R.T."/>
            <person name="Haft D.H."/>
            <person name="Dodson R.J."/>
            <person name="Durkin A.S."/>
            <person name="Gwinn M.L."/>
            <person name="Kolonay J.F."/>
            <person name="Nelson W.C."/>
            <person name="Peterson J.D."/>
            <person name="Umayam L.A."/>
            <person name="White O."/>
            <person name="Salzberg S.L."/>
            <person name="Lewis M.R."/>
            <person name="Radune D."/>
            <person name="Holtzapple E.K."/>
            <person name="Khouri H.M."/>
            <person name="Wolf A.M."/>
            <person name="Utterback T.R."/>
            <person name="Hansen C.L."/>
            <person name="McDonald L.A."/>
            <person name="Feldblyum T.V."/>
            <person name="Angiuoli S.V."/>
            <person name="Dickinson T."/>
            <person name="Hickey E.K."/>
            <person name="Holt I.E."/>
            <person name="Loftus B.J."/>
            <person name="Yang F."/>
            <person name="Smith H.O."/>
            <person name="Venter J.C."/>
            <person name="Dougherty B.A."/>
            <person name="Morrison D.A."/>
            <person name="Hollingshead S.K."/>
            <person name="Fraser C.M."/>
        </authorList>
    </citation>
    <scope>NUCLEOTIDE SEQUENCE [LARGE SCALE GENOMIC DNA]</scope>
    <source>
        <strain>ATCC BAA-334 / TIGR4</strain>
    </source>
</reference>
<dbReference type="EMBL" id="AE005672">
    <property type="protein sequence ID" value="AAK75081.1"/>
    <property type="molecule type" value="Genomic_DNA"/>
</dbReference>
<dbReference type="PIR" id="H95110">
    <property type="entry name" value="H95110"/>
</dbReference>
<dbReference type="RefSeq" id="WP_001125943.1">
    <property type="nucleotide sequence ID" value="NZ_CP155539.1"/>
</dbReference>
<dbReference type="SMR" id="P66278"/>
<dbReference type="PaxDb" id="170187-SP_0960"/>
<dbReference type="EnsemblBacteria" id="AAK75081">
    <property type="protein sequence ID" value="AAK75081"/>
    <property type="gene ID" value="SP_0960"/>
</dbReference>
<dbReference type="GeneID" id="93739777"/>
<dbReference type="KEGG" id="spn:SP_0960"/>
<dbReference type="eggNOG" id="COG0291">
    <property type="taxonomic scope" value="Bacteria"/>
</dbReference>
<dbReference type="PhylomeDB" id="P66278"/>
<dbReference type="BioCyc" id="SPNE170187:G1FZB-988-MONOMER"/>
<dbReference type="Proteomes" id="UP000000585">
    <property type="component" value="Chromosome"/>
</dbReference>
<dbReference type="GO" id="GO:0022625">
    <property type="term" value="C:cytosolic large ribosomal subunit"/>
    <property type="evidence" value="ECO:0007669"/>
    <property type="project" value="TreeGrafter"/>
</dbReference>
<dbReference type="GO" id="GO:0003735">
    <property type="term" value="F:structural constituent of ribosome"/>
    <property type="evidence" value="ECO:0007669"/>
    <property type="project" value="InterPro"/>
</dbReference>
<dbReference type="GO" id="GO:0006412">
    <property type="term" value="P:translation"/>
    <property type="evidence" value="ECO:0007669"/>
    <property type="project" value="UniProtKB-UniRule"/>
</dbReference>
<dbReference type="FunFam" id="4.10.410.60:FF:000001">
    <property type="entry name" value="50S ribosomal protein L35"/>
    <property type="match status" value="1"/>
</dbReference>
<dbReference type="Gene3D" id="4.10.410.60">
    <property type="match status" value="1"/>
</dbReference>
<dbReference type="HAMAP" id="MF_00514">
    <property type="entry name" value="Ribosomal_bL35"/>
    <property type="match status" value="1"/>
</dbReference>
<dbReference type="InterPro" id="IPR001706">
    <property type="entry name" value="Ribosomal_bL35"/>
</dbReference>
<dbReference type="InterPro" id="IPR021137">
    <property type="entry name" value="Ribosomal_bL35-like"/>
</dbReference>
<dbReference type="InterPro" id="IPR018265">
    <property type="entry name" value="Ribosomal_bL35_CS"/>
</dbReference>
<dbReference type="InterPro" id="IPR037229">
    <property type="entry name" value="Ribosomal_bL35_sf"/>
</dbReference>
<dbReference type="NCBIfam" id="TIGR00001">
    <property type="entry name" value="rpmI_bact"/>
    <property type="match status" value="1"/>
</dbReference>
<dbReference type="PANTHER" id="PTHR33343">
    <property type="entry name" value="54S RIBOSOMAL PROTEIN BL35M"/>
    <property type="match status" value="1"/>
</dbReference>
<dbReference type="PANTHER" id="PTHR33343:SF1">
    <property type="entry name" value="LARGE RIBOSOMAL SUBUNIT PROTEIN BL35M"/>
    <property type="match status" value="1"/>
</dbReference>
<dbReference type="Pfam" id="PF01632">
    <property type="entry name" value="Ribosomal_L35p"/>
    <property type="match status" value="1"/>
</dbReference>
<dbReference type="PRINTS" id="PR00064">
    <property type="entry name" value="RIBOSOMALL35"/>
</dbReference>
<dbReference type="SUPFAM" id="SSF143034">
    <property type="entry name" value="L35p-like"/>
    <property type="match status" value="1"/>
</dbReference>
<dbReference type="PROSITE" id="PS00936">
    <property type="entry name" value="RIBOSOMAL_L35"/>
    <property type="match status" value="1"/>
</dbReference>
<sequence length="66" mass="7836">MPKQKTHRASAKRFKRTGSGGLKRFRAYTSHRFHGKTKKQRRHLRKASMVHSGDYKRIKAMLTRLK</sequence>
<name>RL35_STRPN</name>
<proteinExistence type="inferred from homology"/>
<gene>
    <name evidence="1" type="primary">rpmI</name>
    <name type="ordered locus">SP_0960</name>
</gene>
<evidence type="ECO:0000255" key="1">
    <source>
        <dbReference type="HAMAP-Rule" id="MF_00514"/>
    </source>
</evidence>
<evidence type="ECO:0000256" key="2">
    <source>
        <dbReference type="SAM" id="MobiDB-lite"/>
    </source>
</evidence>
<evidence type="ECO:0000305" key="3"/>
<comment type="similarity">
    <text evidence="1">Belongs to the bacterial ribosomal protein bL35 family.</text>
</comment>